<accession>Q68RY7</accession>
<gene>
    <name evidence="1" type="primary">petG</name>
    <name type="ORF">PSC0680</name>
</gene>
<geneLocation type="chloroplast"/>
<name>PETG_PANGI</name>
<feature type="chain" id="PRO_0000216396" description="Cytochrome b6-f complex subunit 5">
    <location>
        <begin position="1"/>
        <end position="37"/>
    </location>
</feature>
<feature type="transmembrane region" description="Helical" evidence="1">
    <location>
        <begin position="5"/>
        <end position="25"/>
    </location>
</feature>
<protein>
    <recommendedName>
        <fullName evidence="1">Cytochrome b6-f complex subunit 5</fullName>
    </recommendedName>
    <alternativeName>
        <fullName evidence="1">Cytochrome b6-f complex subunit PetG</fullName>
    </alternativeName>
    <alternativeName>
        <fullName evidence="1">Cytochrome b6-f complex subunit V</fullName>
    </alternativeName>
</protein>
<comment type="function">
    <text evidence="1">Component of the cytochrome b6-f complex, which mediates electron transfer between photosystem II (PSII) and photosystem I (PSI), cyclic electron flow around PSI, and state transitions. PetG is required for either the stability or assembly of the cytochrome b6-f complex.</text>
</comment>
<comment type="subunit">
    <text evidence="1">The 4 large subunits of the cytochrome b6-f complex are cytochrome b6, subunit IV (17 kDa polypeptide, PetD), cytochrome f and the Rieske protein, while the 4 small subunits are PetG, PetL, PetM and PetN. The complex functions as a dimer.</text>
</comment>
<comment type="subcellular location">
    <subcellularLocation>
        <location evidence="1">Plastid</location>
        <location evidence="1">Chloroplast thylakoid membrane</location>
        <topology evidence="1">Single-pass membrane protein</topology>
    </subcellularLocation>
</comment>
<comment type="similarity">
    <text evidence="1">Belongs to the PetG family.</text>
</comment>
<organism>
    <name type="scientific">Panax ginseng</name>
    <name type="common">Korean ginseng</name>
    <dbReference type="NCBI Taxonomy" id="4054"/>
    <lineage>
        <taxon>Eukaryota</taxon>
        <taxon>Viridiplantae</taxon>
        <taxon>Streptophyta</taxon>
        <taxon>Embryophyta</taxon>
        <taxon>Tracheophyta</taxon>
        <taxon>Spermatophyta</taxon>
        <taxon>Magnoliopsida</taxon>
        <taxon>eudicotyledons</taxon>
        <taxon>Gunneridae</taxon>
        <taxon>Pentapetalae</taxon>
        <taxon>asterids</taxon>
        <taxon>campanulids</taxon>
        <taxon>Apiales</taxon>
        <taxon>Araliaceae</taxon>
        <taxon>Panax</taxon>
    </lineage>
</organism>
<evidence type="ECO:0000255" key="1">
    <source>
        <dbReference type="HAMAP-Rule" id="MF_00432"/>
    </source>
</evidence>
<dbReference type="EMBL" id="AY582139">
    <property type="protein sequence ID" value="AAT98528.1"/>
    <property type="molecule type" value="Genomic_DNA"/>
</dbReference>
<dbReference type="RefSeq" id="YP_086985.1">
    <property type="nucleotide sequence ID" value="NC_006290.1"/>
</dbReference>
<dbReference type="SMR" id="Q68RY7"/>
<dbReference type="GeneID" id="3021492"/>
<dbReference type="GO" id="GO:0009535">
    <property type="term" value="C:chloroplast thylakoid membrane"/>
    <property type="evidence" value="ECO:0007669"/>
    <property type="project" value="UniProtKB-SubCell"/>
</dbReference>
<dbReference type="GO" id="GO:0009512">
    <property type="term" value="C:cytochrome b6f complex"/>
    <property type="evidence" value="ECO:0007669"/>
    <property type="project" value="InterPro"/>
</dbReference>
<dbReference type="GO" id="GO:0045158">
    <property type="term" value="F:electron transporter, transferring electrons within cytochrome b6/f complex of photosystem II activity"/>
    <property type="evidence" value="ECO:0007669"/>
    <property type="project" value="UniProtKB-UniRule"/>
</dbReference>
<dbReference type="GO" id="GO:0017004">
    <property type="term" value="P:cytochrome complex assembly"/>
    <property type="evidence" value="ECO:0007669"/>
    <property type="project" value="UniProtKB-UniRule"/>
</dbReference>
<dbReference type="GO" id="GO:0015979">
    <property type="term" value="P:photosynthesis"/>
    <property type="evidence" value="ECO:0007669"/>
    <property type="project" value="UniProtKB-KW"/>
</dbReference>
<dbReference type="HAMAP" id="MF_00432">
    <property type="entry name" value="Cytb6_f_PetG"/>
    <property type="match status" value="1"/>
</dbReference>
<dbReference type="InterPro" id="IPR003683">
    <property type="entry name" value="Cyt_6/f_cplx_su5"/>
</dbReference>
<dbReference type="InterPro" id="IPR036099">
    <property type="entry name" value="Cyt_6/f_cplx_su5_sf"/>
</dbReference>
<dbReference type="NCBIfam" id="NF001907">
    <property type="entry name" value="PRK00665.1"/>
    <property type="match status" value="1"/>
</dbReference>
<dbReference type="Pfam" id="PF02529">
    <property type="entry name" value="PetG"/>
    <property type="match status" value="1"/>
</dbReference>
<dbReference type="PIRSF" id="PIRSF000034">
    <property type="entry name" value="Cyt_b6-f_V"/>
    <property type="match status" value="1"/>
</dbReference>
<dbReference type="SUPFAM" id="SSF103446">
    <property type="entry name" value="PetG subunit of the cytochrome b6f complex"/>
    <property type="match status" value="1"/>
</dbReference>
<reference key="1">
    <citation type="journal article" date="2004" name="DNA Res.">
        <title>Complete chloroplast genome sequence from Korea ginseng (Panax schinseng Nees) and comparative analysis of sequence evolution among 17 vascular plants.</title>
        <authorList>
            <person name="Kim K.-J."/>
            <person name="Lee H.-L."/>
        </authorList>
    </citation>
    <scope>NUCLEOTIDE SEQUENCE [LARGE SCALE GENOMIC DNA]</scope>
</reference>
<keyword id="KW-0150">Chloroplast</keyword>
<keyword id="KW-0249">Electron transport</keyword>
<keyword id="KW-0472">Membrane</keyword>
<keyword id="KW-0602">Photosynthesis</keyword>
<keyword id="KW-0934">Plastid</keyword>
<keyword id="KW-0793">Thylakoid</keyword>
<keyword id="KW-0812">Transmembrane</keyword>
<keyword id="KW-1133">Transmembrane helix</keyword>
<keyword id="KW-0813">Transport</keyword>
<sequence length="37" mass="4170">MIEVFLFGIVLGLIPITLAGLFVTAYLQYRRGDQLDL</sequence>
<proteinExistence type="inferred from homology"/>